<protein>
    <recommendedName>
        <fullName evidence="1">3-phosphoshikimate 1-carboxyvinyltransferase</fullName>
        <ecNumber evidence="1 2">2.5.1.19</ecNumber>
    </recommendedName>
    <alternativeName>
        <fullName evidence="1 4">5-enolpyruvylshikimate-3-phosphate synthase</fullName>
        <shortName evidence="1">EPSP synthase</shortName>
        <shortName evidence="1">EPSPS</shortName>
    </alternativeName>
</protein>
<dbReference type="EC" id="2.5.1.19" evidence="1 2"/>
<dbReference type="EMBL" id="AF169483">
    <property type="protein sequence ID" value="AAD45819.1"/>
    <property type="molecule type" value="Genomic_DNA"/>
</dbReference>
<dbReference type="EMBL" id="AE005672">
    <property type="protein sequence ID" value="AAK75469.1"/>
    <property type="molecule type" value="Genomic_DNA"/>
</dbReference>
<dbReference type="PIR" id="D95159">
    <property type="entry name" value="D95159"/>
</dbReference>
<dbReference type="RefSeq" id="WP_001808726.1">
    <property type="nucleotide sequence ID" value="NC_003028.3"/>
</dbReference>
<dbReference type="PDB" id="1RF4">
    <property type="method" value="X-ray"/>
    <property type="resolution" value="2.20 A"/>
    <property type="chains" value="A/B/C/D=1-427"/>
</dbReference>
<dbReference type="PDB" id="1RF5">
    <property type="method" value="X-ray"/>
    <property type="resolution" value="2.30 A"/>
    <property type="chains" value="A/B/C/D=1-427"/>
</dbReference>
<dbReference type="PDB" id="1RF6">
    <property type="method" value="X-ray"/>
    <property type="resolution" value="1.90 A"/>
    <property type="chains" value="A/B/C/D=1-427"/>
</dbReference>
<dbReference type="PDBsum" id="1RF4"/>
<dbReference type="PDBsum" id="1RF5"/>
<dbReference type="PDBsum" id="1RF6"/>
<dbReference type="SMR" id="Q9S400"/>
<dbReference type="IntAct" id="Q9S400">
    <property type="interactions" value="3"/>
</dbReference>
<dbReference type="DrugBank" id="DB04539">
    <property type="generic name" value="Glyphosate"/>
</dbReference>
<dbReference type="DrugBank" id="DB04328">
    <property type="generic name" value="Shikimate-3-Phosphate"/>
</dbReference>
<dbReference type="PaxDb" id="170187-SP_1371"/>
<dbReference type="EnsemblBacteria" id="AAK75469">
    <property type="protein sequence ID" value="AAK75469"/>
    <property type="gene ID" value="SP_1371"/>
</dbReference>
<dbReference type="KEGG" id="spn:SP_1371"/>
<dbReference type="eggNOG" id="COG0128">
    <property type="taxonomic scope" value="Bacteria"/>
</dbReference>
<dbReference type="PhylomeDB" id="Q9S400"/>
<dbReference type="BioCyc" id="SPNE170187:G1FZB-1380-MONOMER"/>
<dbReference type="BRENDA" id="2.5.1.19">
    <property type="organism ID" value="1960"/>
</dbReference>
<dbReference type="SABIO-RK" id="Q9S400"/>
<dbReference type="UniPathway" id="UPA00053">
    <property type="reaction ID" value="UER00089"/>
</dbReference>
<dbReference type="EvolutionaryTrace" id="Q9S400"/>
<dbReference type="Proteomes" id="UP000000585">
    <property type="component" value="Chromosome"/>
</dbReference>
<dbReference type="GO" id="GO:0005737">
    <property type="term" value="C:cytoplasm"/>
    <property type="evidence" value="ECO:0007669"/>
    <property type="project" value="UniProtKB-SubCell"/>
</dbReference>
<dbReference type="GO" id="GO:0003866">
    <property type="term" value="F:3-phosphoshikimate 1-carboxyvinyltransferase activity"/>
    <property type="evidence" value="ECO:0007669"/>
    <property type="project" value="UniProtKB-UniRule"/>
</dbReference>
<dbReference type="GO" id="GO:0008652">
    <property type="term" value="P:amino acid biosynthetic process"/>
    <property type="evidence" value="ECO:0007669"/>
    <property type="project" value="UniProtKB-KW"/>
</dbReference>
<dbReference type="GO" id="GO:0009073">
    <property type="term" value="P:aromatic amino acid family biosynthetic process"/>
    <property type="evidence" value="ECO:0007669"/>
    <property type="project" value="UniProtKB-KW"/>
</dbReference>
<dbReference type="GO" id="GO:0009423">
    <property type="term" value="P:chorismate biosynthetic process"/>
    <property type="evidence" value="ECO:0007669"/>
    <property type="project" value="UniProtKB-UniRule"/>
</dbReference>
<dbReference type="CDD" id="cd01554">
    <property type="entry name" value="EPT-like"/>
    <property type="match status" value="1"/>
</dbReference>
<dbReference type="FunFam" id="3.65.10.10:FF:000005">
    <property type="entry name" value="3-phosphoshikimate 1-carboxyvinyltransferase"/>
    <property type="match status" value="1"/>
</dbReference>
<dbReference type="FunFam" id="3.65.10.10:FF:000006">
    <property type="entry name" value="3-phosphoshikimate 1-carboxyvinyltransferase"/>
    <property type="match status" value="1"/>
</dbReference>
<dbReference type="Gene3D" id="3.65.10.10">
    <property type="entry name" value="Enolpyruvate transferase domain"/>
    <property type="match status" value="2"/>
</dbReference>
<dbReference type="HAMAP" id="MF_00210">
    <property type="entry name" value="EPSP_synth"/>
    <property type="match status" value="1"/>
</dbReference>
<dbReference type="InterPro" id="IPR001986">
    <property type="entry name" value="Enolpyruvate_Tfrase_dom"/>
</dbReference>
<dbReference type="InterPro" id="IPR036968">
    <property type="entry name" value="Enolpyruvate_Tfrase_sf"/>
</dbReference>
<dbReference type="InterPro" id="IPR006264">
    <property type="entry name" value="EPSP_synthase"/>
</dbReference>
<dbReference type="InterPro" id="IPR023193">
    <property type="entry name" value="EPSP_synthase_CS"/>
</dbReference>
<dbReference type="InterPro" id="IPR013792">
    <property type="entry name" value="RNA3'P_cycl/enolpyr_Trfase_a/b"/>
</dbReference>
<dbReference type="NCBIfam" id="TIGR01356">
    <property type="entry name" value="aroA"/>
    <property type="match status" value="1"/>
</dbReference>
<dbReference type="PANTHER" id="PTHR21090">
    <property type="entry name" value="AROM/DEHYDROQUINATE SYNTHASE"/>
    <property type="match status" value="1"/>
</dbReference>
<dbReference type="PANTHER" id="PTHR21090:SF5">
    <property type="entry name" value="PENTAFUNCTIONAL AROM POLYPEPTIDE"/>
    <property type="match status" value="1"/>
</dbReference>
<dbReference type="Pfam" id="PF00275">
    <property type="entry name" value="EPSP_synthase"/>
    <property type="match status" value="1"/>
</dbReference>
<dbReference type="PIRSF" id="PIRSF000505">
    <property type="entry name" value="EPSPS"/>
    <property type="match status" value="1"/>
</dbReference>
<dbReference type="SUPFAM" id="SSF55205">
    <property type="entry name" value="EPT/RTPC-like"/>
    <property type="match status" value="1"/>
</dbReference>
<dbReference type="PROSITE" id="PS00104">
    <property type="entry name" value="EPSP_SYNTHASE_1"/>
    <property type="match status" value="1"/>
</dbReference>
<dbReference type="PROSITE" id="PS00885">
    <property type="entry name" value="EPSP_SYNTHASE_2"/>
    <property type="match status" value="1"/>
</dbReference>
<sequence length="427" mass="45766">MKLKTNIRHLHGSIRVPGDKSISHRSIIFGSLAEGETKVYDILRGEDVLSTMQVFRDLGVEIEDKDGVITIQGVGMAGLKAPQNALNMGNSGTSIRLISGVLAGADFEVEMFGDDSLSKRPMDRVTLPLKKMGVSISGQTERDLPPLRLKGTKNLRPIHYELPIASAQVKSALMFAALQAKGESVIIEKEYTRNHTEDMLKQFGGHLSVDGKKITVQGPQKLTGQKVVVPGDISSAAFWLVAGLIAPNSRLVLQNVGINETRTGIIDVIRAMGGKLEITEIDPVAKSATLIVESSDLKGTEIGGALIPRLIDELPIIALLATQAQGVTVIKDAEELKVKETDRIQVVADALNSMGADITPTADGMIIKGKSALHGARVNTFGDHRIGMMTAIAALLVADGEVELDRAEAINTSYPSFFDDLESLIHG</sequence>
<evidence type="ECO:0000255" key="1">
    <source>
        <dbReference type="HAMAP-Rule" id="MF_00210"/>
    </source>
</evidence>
<evidence type="ECO:0000269" key="2">
    <source>
    </source>
</evidence>
<evidence type="ECO:0000269" key="3">
    <source>
    </source>
</evidence>
<evidence type="ECO:0000303" key="4">
    <source>
    </source>
</evidence>
<evidence type="ECO:0000305" key="5"/>
<evidence type="ECO:0000305" key="6">
    <source>
    </source>
</evidence>
<evidence type="ECO:0007744" key="7">
    <source>
        <dbReference type="PDB" id="1RF4"/>
    </source>
</evidence>
<evidence type="ECO:0007744" key="8">
    <source>
        <dbReference type="PDB" id="1RF5"/>
    </source>
</evidence>
<evidence type="ECO:0007744" key="9">
    <source>
        <dbReference type="PDB" id="1RF6"/>
    </source>
</evidence>
<evidence type="ECO:0007829" key="10">
    <source>
        <dbReference type="PDB" id="1RF5"/>
    </source>
</evidence>
<evidence type="ECO:0007829" key="11">
    <source>
        <dbReference type="PDB" id="1RF6"/>
    </source>
</evidence>
<keyword id="KW-0002">3D-structure</keyword>
<keyword id="KW-0028">Amino-acid biosynthesis</keyword>
<keyword id="KW-0057">Aromatic amino acid biosynthesis</keyword>
<keyword id="KW-0963">Cytoplasm</keyword>
<keyword id="KW-0903">Direct protein sequencing</keyword>
<keyword id="KW-1185">Reference proteome</keyword>
<keyword id="KW-0808">Transferase</keyword>
<gene>
    <name evidence="1" type="primary">aroA</name>
    <name type="ordered locus">SP_1371</name>
</gene>
<organism>
    <name type="scientific">Streptococcus pneumoniae serotype 4 (strain ATCC BAA-334 / TIGR4)</name>
    <dbReference type="NCBI Taxonomy" id="170187"/>
    <lineage>
        <taxon>Bacteria</taxon>
        <taxon>Bacillati</taxon>
        <taxon>Bacillota</taxon>
        <taxon>Bacilli</taxon>
        <taxon>Lactobacillales</taxon>
        <taxon>Streptococcaceae</taxon>
        <taxon>Streptococcus</taxon>
    </lineage>
</organism>
<proteinExistence type="evidence at protein level"/>
<reference key="1">
    <citation type="journal article" date="2000" name="Eur. J. Biochem.">
        <title>Characterization of Streptococcus pneumoniae 5-enolpyruvylshikimate 3-phosphate synthase and its activation by univalent cations.</title>
        <authorList>
            <person name="Du W."/>
            <person name="Wallis N.G."/>
            <person name="Mazzulla M.J."/>
            <person name="Chalker A.F."/>
            <person name="Zhang L."/>
            <person name="Liu W.-S."/>
            <person name="Kallender H."/>
            <person name="Payne D.J."/>
        </authorList>
    </citation>
    <scope>NUCLEOTIDE SEQUENCE [GENOMIC DNA]</scope>
    <scope>PROTEIN SEQUENCE OF N-TERMINUS</scope>
    <scope>FUNCTION</scope>
    <scope>CATALYTIC ACTIVITY</scope>
    <scope>BIOPHYSICOCHEMICAL PROPERTIES</scope>
    <scope>ACTIVITY REGULATION</scope>
    <scope>MASS SPECTROMETRY</scope>
    <source>
        <strain>NCIMB 40794 / 0100993</strain>
    </source>
</reference>
<reference key="2">
    <citation type="journal article" date="2001" name="Science">
        <title>Complete genome sequence of a virulent isolate of Streptococcus pneumoniae.</title>
        <authorList>
            <person name="Tettelin H."/>
            <person name="Nelson K.E."/>
            <person name="Paulsen I.T."/>
            <person name="Eisen J.A."/>
            <person name="Read T.D."/>
            <person name="Peterson S.N."/>
            <person name="Heidelberg J.F."/>
            <person name="DeBoy R.T."/>
            <person name="Haft D.H."/>
            <person name="Dodson R.J."/>
            <person name="Durkin A.S."/>
            <person name="Gwinn M.L."/>
            <person name="Kolonay J.F."/>
            <person name="Nelson W.C."/>
            <person name="Peterson J.D."/>
            <person name="Umayam L.A."/>
            <person name="White O."/>
            <person name="Salzberg S.L."/>
            <person name="Lewis M.R."/>
            <person name="Radune D."/>
            <person name="Holtzapple E.K."/>
            <person name="Khouri H.M."/>
            <person name="Wolf A.M."/>
            <person name="Utterback T.R."/>
            <person name="Hansen C.L."/>
            <person name="McDonald L.A."/>
            <person name="Feldblyum T.V."/>
            <person name="Angiuoli S.V."/>
            <person name="Dickinson T."/>
            <person name="Hickey E.K."/>
            <person name="Holt I.E."/>
            <person name="Loftus B.J."/>
            <person name="Yang F."/>
            <person name="Smith H.O."/>
            <person name="Venter J.C."/>
            <person name="Dougherty B.A."/>
            <person name="Morrison D.A."/>
            <person name="Hollingshead S.K."/>
            <person name="Fraser C.M."/>
        </authorList>
    </citation>
    <scope>NUCLEOTIDE SEQUENCE [LARGE SCALE GENOMIC DNA]</scope>
    <source>
        <strain>ATCC BAA-334 / TIGR4</strain>
    </source>
</reference>
<reference evidence="7 8 9" key="3">
    <citation type="journal article" date="2004" name="Mol. Microbiol.">
        <title>Structural studies of Streptococcus pneumoniae EPSP synthase in unliganded state, tetrahedral intermediate-bound state and S3P-GLP-bound state.</title>
        <authorList>
            <person name="Park H."/>
            <person name="Hilsenbeck J.L."/>
            <person name="Kim H.J."/>
            <person name="Shuttleworth W.A."/>
            <person name="Park Y.H."/>
            <person name="Evans J.N."/>
            <person name="Kang C."/>
        </authorList>
    </citation>
    <scope>X-RAY CRYSTALLOGRAPHY (1.90 ANGSTROMS) OF APOENZYME AND COMPLEXES WITH SHIKIMATE-3-PHOSPHATE; GLYPHOSATE AND A TETRAHEDRAL INTERMEDIATE</scope>
    <scope>FUNCTION</scope>
    <scope>ACTIVE SITE</scope>
    <scope>SUBUNIT</scope>
</reference>
<feature type="chain" id="PRO_0000088304" description="3-phosphoshikimate 1-carboxyvinyltransferase">
    <location>
        <begin position="1"/>
        <end position="427"/>
    </location>
</feature>
<feature type="active site" description="Proton acceptor" evidence="1 6">
    <location>
        <position position="312"/>
    </location>
</feature>
<feature type="binding site" evidence="1">
    <location>
        <position position="20"/>
    </location>
    <ligand>
        <name>phosphoenolpyruvate</name>
        <dbReference type="ChEBI" id="CHEBI:58702"/>
    </ligand>
</feature>
<feature type="binding site" evidence="3 9">
    <location>
        <position position="21"/>
    </location>
    <ligand>
        <name>3-phosphoshikimate</name>
        <dbReference type="ChEBI" id="CHEBI:145989"/>
    </ligand>
</feature>
<feature type="binding site" evidence="3 9">
    <location>
        <position position="25"/>
    </location>
    <ligand>
        <name>3-phosphoshikimate</name>
        <dbReference type="ChEBI" id="CHEBI:145989"/>
    </ligand>
</feature>
<feature type="binding site" evidence="1">
    <location>
        <position position="92"/>
    </location>
    <ligand>
        <name>phosphoenolpyruvate</name>
        <dbReference type="ChEBI" id="CHEBI:58702"/>
    </ligand>
</feature>
<feature type="binding site" evidence="1">
    <location>
        <position position="120"/>
    </location>
    <ligand>
        <name>phosphoenolpyruvate</name>
        <dbReference type="ChEBI" id="CHEBI:58702"/>
    </ligand>
</feature>
<feature type="binding site" evidence="3 9">
    <location>
        <position position="166"/>
    </location>
    <ligand>
        <name>3-phosphoshikimate</name>
        <dbReference type="ChEBI" id="CHEBI:145989"/>
    </ligand>
</feature>
<feature type="binding site" evidence="3 9">
    <location>
        <position position="167"/>
    </location>
    <ligand>
        <name>3-phosphoshikimate</name>
        <dbReference type="ChEBI" id="CHEBI:145989"/>
    </ligand>
</feature>
<feature type="binding site" evidence="3 9">
    <location>
        <position position="168"/>
    </location>
    <ligand>
        <name>3-phosphoshikimate</name>
        <dbReference type="ChEBI" id="CHEBI:145989"/>
    </ligand>
</feature>
<feature type="binding site" evidence="1">
    <location>
        <position position="168"/>
    </location>
    <ligand>
        <name>phosphoenolpyruvate</name>
        <dbReference type="ChEBI" id="CHEBI:58702"/>
    </ligand>
</feature>
<feature type="binding site" evidence="3 9">
    <location>
        <position position="312"/>
    </location>
    <ligand>
        <name>3-phosphoshikimate</name>
        <dbReference type="ChEBI" id="CHEBI:145989"/>
    </ligand>
</feature>
<feature type="binding site" evidence="3 9">
    <location>
        <position position="339"/>
    </location>
    <ligand>
        <name>3-phosphoshikimate</name>
        <dbReference type="ChEBI" id="CHEBI:145989"/>
    </ligand>
</feature>
<feature type="binding site" evidence="1">
    <location>
        <position position="343"/>
    </location>
    <ligand>
        <name>phosphoenolpyruvate</name>
        <dbReference type="ChEBI" id="CHEBI:58702"/>
    </ligand>
</feature>
<feature type="binding site" evidence="1">
    <location>
        <position position="385"/>
    </location>
    <ligand>
        <name>phosphoenolpyruvate</name>
        <dbReference type="ChEBI" id="CHEBI:58702"/>
    </ligand>
</feature>
<feature type="sequence conflict" description="In Ref. 1; AAD45819." evidence="5" ref="1">
    <original>S</original>
    <variation>I</variation>
    <location>
        <position position="13"/>
    </location>
</feature>
<feature type="sequence conflict" description="In Ref. 1; AAD45819." evidence="5" ref="1">
    <original>I</original>
    <variation>V</variation>
    <location>
        <position position="71"/>
    </location>
</feature>
<feature type="sequence conflict" description="In Ref. 1; AAD45819." evidence="5" ref="1">
    <original>K</original>
    <variation>Q</variation>
    <location>
        <position position="201"/>
    </location>
</feature>
<feature type="sequence conflict" description="In Ref. 1; AAD45819." evidence="5" ref="1">
    <original>G</original>
    <variation>C</variation>
    <location>
        <position position="303"/>
    </location>
</feature>
<feature type="strand" evidence="11">
    <location>
        <begin position="10"/>
        <end position="14"/>
    </location>
</feature>
<feature type="helix" evidence="11">
    <location>
        <begin position="20"/>
        <end position="32"/>
    </location>
</feature>
<feature type="strand" evidence="11">
    <location>
        <begin position="33"/>
        <end position="41"/>
    </location>
</feature>
<feature type="helix" evidence="11">
    <location>
        <begin position="46"/>
        <end position="57"/>
    </location>
</feature>
<feature type="strand" evidence="11">
    <location>
        <begin position="61"/>
        <end position="65"/>
    </location>
</feature>
<feature type="strand" evidence="11">
    <location>
        <begin position="68"/>
        <end position="72"/>
    </location>
</feature>
<feature type="strand" evidence="10">
    <location>
        <begin position="86"/>
        <end position="89"/>
    </location>
</feature>
<feature type="helix" evidence="11">
    <location>
        <begin position="92"/>
        <end position="101"/>
    </location>
</feature>
<feature type="helix" evidence="11">
    <location>
        <begin position="102"/>
        <end position="104"/>
    </location>
</feature>
<feature type="strand" evidence="11">
    <location>
        <begin position="106"/>
        <end position="112"/>
    </location>
</feature>
<feature type="helix" evidence="11">
    <location>
        <begin position="117"/>
        <end position="119"/>
    </location>
</feature>
<feature type="helix" evidence="11">
    <location>
        <begin position="123"/>
        <end position="131"/>
    </location>
</feature>
<feature type="strand" evidence="11">
    <location>
        <begin position="135"/>
        <end position="139"/>
    </location>
</feature>
<feature type="turn" evidence="11">
    <location>
        <begin position="140"/>
        <end position="143"/>
    </location>
</feature>
<feature type="strand" evidence="11">
    <location>
        <begin position="144"/>
        <end position="150"/>
    </location>
</feature>
<feature type="strand" evidence="11">
    <location>
        <begin position="159"/>
        <end position="161"/>
    </location>
</feature>
<feature type="helix" evidence="11">
    <location>
        <begin position="167"/>
        <end position="177"/>
    </location>
</feature>
<feature type="strand" evidence="11">
    <location>
        <begin position="180"/>
        <end position="187"/>
    </location>
</feature>
<feature type="helix" evidence="11">
    <location>
        <begin position="195"/>
        <end position="202"/>
    </location>
</feature>
<feature type="strand" evidence="11">
    <location>
        <begin position="208"/>
        <end position="210"/>
    </location>
</feature>
<feature type="strand" evidence="11">
    <location>
        <begin position="213"/>
        <end position="218"/>
    </location>
</feature>
<feature type="strand" evidence="11">
    <location>
        <begin position="226"/>
        <end position="228"/>
    </location>
</feature>
<feature type="helix" evidence="11">
    <location>
        <begin position="233"/>
        <end position="245"/>
    </location>
</feature>
<feature type="strand" evidence="11">
    <location>
        <begin position="249"/>
        <end position="257"/>
    </location>
</feature>
<feature type="turn" evidence="11">
    <location>
        <begin position="260"/>
        <end position="262"/>
    </location>
</feature>
<feature type="helix" evidence="11">
    <location>
        <begin position="264"/>
        <end position="271"/>
    </location>
</feature>
<feature type="strand" evidence="11">
    <location>
        <begin position="275"/>
        <end position="282"/>
    </location>
</feature>
<feature type="turn" evidence="11">
    <location>
        <begin position="283"/>
        <end position="286"/>
    </location>
</feature>
<feature type="strand" evidence="11">
    <location>
        <begin position="287"/>
        <end position="293"/>
    </location>
</feature>
<feature type="turn" evidence="10">
    <location>
        <begin position="304"/>
        <end position="306"/>
    </location>
</feature>
<feature type="helix" evidence="11">
    <location>
        <begin position="307"/>
        <end position="309"/>
    </location>
</feature>
<feature type="helix" evidence="11">
    <location>
        <begin position="311"/>
        <end position="313"/>
    </location>
</feature>
<feature type="helix" evidence="11">
    <location>
        <begin position="314"/>
        <end position="322"/>
    </location>
</feature>
<feature type="strand" evidence="11">
    <location>
        <begin position="324"/>
        <end position="330"/>
    </location>
</feature>
<feature type="helix" evidence="11">
    <location>
        <begin position="334"/>
        <end position="338"/>
    </location>
</feature>
<feature type="strand" evidence="11">
    <location>
        <begin position="339"/>
        <end position="341"/>
    </location>
</feature>
<feature type="helix" evidence="11">
    <location>
        <begin position="345"/>
        <end position="352"/>
    </location>
</feature>
<feature type="turn" evidence="11">
    <location>
        <begin position="353"/>
        <end position="355"/>
    </location>
</feature>
<feature type="strand" evidence="11">
    <location>
        <begin position="358"/>
        <end position="361"/>
    </location>
</feature>
<feature type="strand" evidence="11">
    <location>
        <begin position="364"/>
        <end position="369"/>
    </location>
</feature>
<feature type="strand" evidence="11">
    <location>
        <begin position="376"/>
        <end position="379"/>
    </location>
</feature>
<feature type="helix" evidence="11">
    <location>
        <begin position="384"/>
        <end position="395"/>
    </location>
</feature>
<feature type="strand" evidence="11">
    <location>
        <begin position="398"/>
        <end position="400"/>
    </location>
</feature>
<feature type="strand" evidence="11">
    <location>
        <begin position="402"/>
        <end position="405"/>
    </location>
</feature>
<feature type="helix" evidence="11">
    <location>
        <begin position="407"/>
        <end position="412"/>
    </location>
</feature>
<feature type="helix" evidence="11">
    <location>
        <begin position="417"/>
        <end position="424"/>
    </location>
</feature>
<comment type="function">
    <text evidence="1 2 3">Catalyzes the transfer of the enolpyruvyl moiety of phosphoenolpyruvate (PEP) to the 5-hydroxyl of shikimate-3-phosphate (S3P) to produce enolpyruvyl shikimate-3-phosphate and inorganic phosphate.</text>
</comment>
<comment type="catalytic activity">
    <reaction evidence="1 2">
        <text>3-phosphoshikimate + phosphoenolpyruvate = 5-O-(1-carboxyvinyl)-3-phosphoshikimate + phosphate</text>
        <dbReference type="Rhea" id="RHEA:21256"/>
        <dbReference type="ChEBI" id="CHEBI:43474"/>
        <dbReference type="ChEBI" id="CHEBI:57701"/>
        <dbReference type="ChEBI" id="CHEBI:58702"/>
        <dbReference type="ChEBI" id="CHEBI:145989"/>
        <dbReference type="EC" id="2.5.1.19"/>
    </reaction>
    <physiologicalReaction direction="left-to-right" evidence="1">
        <dbReference type="Rhea" id="RHEA:21257"/>
    </physiologicalReaction>
</comment>
<comment type="activity regulation">
    <text evidence="2">Competitively inhibited by glyphosate. Activated by ammonium, rubidium or potassium ions.</text>
</comment>
<comment type="biophysicochemical properties">
    <kinetics>
        <KM evidence="2">22 uM for PEP (with 100 mM ammonium at pH 7 and 25 degrees Celsius)</KM>
        <KM evidence="2">31 uM for S3P (with 100 mM ammonium at pH 7 and 25 degrees Celsius)</KM>
        <KM evidence="2">91 uM for PEP (with 10 mM ammonium at pH 7 and 25 degrees Celsius)</KM>
        <KM evidence="2">100 uM for PEP (with 1 mM ammonium at pH 7 and 25 degrees Celsius)</KM>
        <KM evidence="2">118 uM for S3P (with 10 mM ammonium at pH 7 and 25 degrees Celsius)</KM>
        <KM evidence="2">145 uM for S3P (with 1 mM ammonium at pH 7 and 25 degrees Celsius)</KM>
    </kinetics>
</comment>
<comment type="pathway">
    <text evidence="1 5">Metabolic intermediate biosynthesis; chorismate biosynthesis; chorismate from D-erythrose 4-phosphate and phosphoenolpyruvate: step 6/7.</text>
</comment>
<comment type="subunit">
    <text evidence="3">Homotetramer.</text>
</comment>
<comment type="interaction">
    <interactant intactId="EBI-2207276">
        <id>Q9S400</id>
    </interactant>
    <interactant intactId="EBI-2207206">
        <id>Q97QS2</id>
        <label>eno</label>
    </interactant>
    <organismsDiffer>false</organismsDiffer>
    <experiments>2</experiments>
</comment>
<comment type="interaction">
    <interactant intactId="EBI-2207276">
        <id>Q9S400</id>
    </interactant>
    <interactant intactId="EBI-2207053">
        <id>Q97SE5</id>
        <label>gatC</label>
    </interactant>
    <organismsDiffer>false</organismsDiffer>
    <experiments>2</experiments>
</comment>
<comment type="interaction">
    <interactant intactId="EBI-2207276">
        <id>Q9S400</id>
    </interactant>
    <interactant intactId="EBI-2206949">
        <id>Q97NV3</id>
        <label>groES</label>
    </interactant>
    <organismsDiffer>false</organismsDiffer>
    <experiments>2</experiments>
</comment>
<comment type="subcellular location">
    <subcellularLocation>
        <location evidence="1">Cytoplasm</location>
    </subcellularLocation>
</comment>
<comment type="mass spectrometry" mass="45825.0" method="MALDI" evidence="2"/>
<comment type="similarity">
    <text evidence="1 5">Belongs to the EPSP synthase family.</text>
</comment>
<accession>Q9S400</accession>
<name>AROA_STRPN</name>